<sequence length="83" mass="9958">MRKGTVKEVLAKIKYDPRENEEDYYIIIEHRGSYGNVRKIPVRIIELGHGYFFIGETQIPYHRILKVVRKDGKVVWESRKIRK</sequence>
<name>Y1058_PYRAB</name>
<comment type="similarity">
    <text evidence="1">Belongs to the UPF0248 family.</text>
</comment>
<reference key="1">
    <citation type="journal article" date="2003" name="Mol. Microbiol.">
        <title>An integrated analysis of the genome of the hyperthermophilic archaeon Pyrococcus abyssi.</title>
        <authorList>
            <person name="Cohen G.N."/>
            <person name="Barbe V."/>
            <person name="Flament D."/>
            <person name="Galperin M."/>
            <person name="Heilig R."/>
            <person name="Lecompte O."/>
            <person name="Poch O."/>
            <person name="Prieur D."/>
            <person name="Querellou J."/>
            <person name="Ripp R."/>
            <person name="Thierry J.-C."/>
            <person name="Van der Oost J."/>
            <person name="Weissenbach J."/>
            <person name="Zivanovic Y."/>
            <person name="Forterre P."/>
        </authorList>
    </citation>
    <scope>NUCLEOTIDE SEQUENCE [LARGE SCALE GENOMIC DNA]</scope>
    <source>
        <strain>GE5 / Orsay</strain>
    </source>
</reference>
<reference key="2">
    <citation type="journal article" date="2012" name="Curr. Microbiol.">
        <title>Re-annotation of two hyperthermophilic archaea Pyrococcus abyssi GE5 and Pyrococcus furiosus DSM 3638.</title>
        <authorList>
            <person name="Gao J."/>
            <person name="Wang J."/>
        </authorList>
    </citation>
    <scope>GENOME REANNOTATION</scope>
    <source>
        <strain>GE5 / Orsay</strain>
    </source>
</reference>
<accession>Q9UZT8</accession>
<accession>G8ZJK9</accession>
<evidence type="ECO:0000255" key="1">
    <source>
        <dbReference type="HAMAP-Rule" id="MF_01245"/>
    </source>
</evidence>
<dbReference type="EMBL" id="AJ248286">
    <property type="protein sequence ID" value="CAB49968.1"/>
    <property type="molecule type" value="Genomic_DNA"/>
</dbReference>
<dbReference type="EMBL" id="HE613800">
    <property type="protein sequence ID" value="CCE70468.1"/>
    <property type="molecule type" value="Genomic_DNA"/>
</dbReference>
<dbReference type="PIR" id="C75083">
    <property type="entry name" value="C75083"/>
</dbReference>
<dbReference type="RefSeq" id="WP_010868176.1">
    <property type="nucleotide sequence ID" value="NC_000868.1"/>
</dbReference>
<dbReference type="STRING" id="272844.PAB3259"/>
<dbReference type="KEGG" id="pab:PAB3259"/>
<dbReference type="PATRIC" id="fig|272844.11.peg.1113"/>
<dbReference type="eggNOG" id="arCOG01302">
    <property type="taxonomic scope" value="Archaea"/>
</dbReference>
<dbReference type="HOGENOM" id="CLU_172276_3_1_2"/>
<dbReference type="OrthoDB" id="14794at2157"/>
<dbReference type="PhylomeDB" id="Q9UZT8"/>
<dbReference type="Proteomes" id="UP000000810">
    <property type="component" value="Chromosome"/>
</dbReference>
<dbReference type="Proteomes" id="UP000009139">
    <property type="component" value="Chromosome"/>
</dbReference>
<dbReference type="HAMAP" id="MF_01245">
    <property type="entry name" value="UPF0248"/>
    <property type="match status" value="1"/>
</dbReference>
<dbReference type="InterPro" id="IPR040459">
    <property type="entry name" value="MJ1316"/>
</dbReference>
<dbReference type="InterPro" id="IPR007547">
    <property type="entry name" value="UPF0248"/>
</dbReference>
<dbReference type="NCBIfam" id="NF003272">
    <property type="entry name" value="PRK04257.1"/>
    <property type="match status" value="1"/>
</dbReference>
<dbReference type="Pfam" id="PF04457">
    <property type="entry name" value="MJ1316"/>
    <property type="match status" value="1"/>
</dbReference>
<organism>
    <name type="scientific">Pyrococcus abyssi (strain GE5 / Orsay)</name>
    <dbReference type="NCBI Taxonomy" id="272844"/>
    <lineage>
        <taxon>Archaea</taxon>
        <taxon>Methanobacteriati</taxon>
        <taxon>Methanobacteriota</taxon>
        <taxon>Thermococci</taxon>
        <taxon>Thermococcales</taxon>
        <taxon>Thermococcaceae</taxon>
        <taxon>Pyrococcus</taxon>
    </lineage>
</organism>
<protein>
    <recommendedName>
        <fullName evidence="1">UPF0248 protein PYRAB10580</fullName>
    </recommendedName>
</protein>
<proteinExistence type="inferred from homology"/>
<gene>
    <name type="ordered locus">PYRAB10580</name>
    <name type="ORF">PAB3259</name>
</gene>
<feature type="chain" id="PRO_0000053417" description="UPF0248 protein PYRAB10580">
    <location>
        <begin position="1"/>
        <end position="83"/>
    </location>
</feature>